<keyword id="KW-0997">Cell inner membrane</keyword>
<keyword id="KW-1003">Cell membrane</keyword>
<keyword id="KW-0342">GTP-binding</keyword>
<keyword id="KW-0378">Hydrolase</keyword>
<keyword id="KW-0472">Membrane</keyword>
<keyword id="KW-0547">Nucleotide-binding</keyword>
<keyword id="KW-0648">Protein biosynthesis</keyword>
<keyword id="KW-1185">Reference proteome</keyword>
<accession>A3QBS5</accession>
<name>LEPA_SHELP</name>
<organism>
    <name type="scientific">Shewanella loihica (strain ATCC BAA-1088 / PV-4)</name>
    <dbReference type="NCBI Taxonomy" id="323850"/>
    <lineage>
        <taxon>Bacteria</taxon>
        <taxon>Pseudomonadati</taxon>
        <taxon>Pseudomonadota</taxon>
        <taxon>Gammaproteobacteria</taxon>
        <taxon>Alteromonadales</taxon>
        <taxon>Shewanellaceae</taxon>
        <taxon>Shewanella</taxon>
    </lineage>
</organism>
<comment type="function">
    <text evidence="1">Required for accurate and efficient protein synthesis under certain stress conditions. May act as a fidelity factor of the translation reaction, by catalyzing a one-codon backward translocation of tRNAs on improperly translocated ribosomes. Back-translocation proceeds from a post-translocation (POST) complex to a pre-translocation (PRE) complex, thus giving elongation factor G a second chance to translocate the tRNAs correctly. Binds to ribosomes in a GTP-dependent manner.</text>
</comment>
<comment type="catalytic activity">
    <reaction evidence="1">
        <text>GTP + H2O = GDP + phosphate + H(+)</text>
        <dbReference type="Rhea" id="RHEA:19669"/>
        <dbReference type="ChEBI" id="CHEBI:15377"/>
        <dbReference type="ChEBI" id="CHEBI:15378"/>
        <dbReference type="ChEBI" id="CHEBI:37565"/>
        <dbReference type="ChEBI" id="CHEBI:43474"/>
        <dbReference type="ChEBI" id="CHEBI:58189"/>
        <dbReference type="EC" id="3.6.5.n1"/>
    </reaction>
</comment>
<comment type="subcellular location">
    <subcellularLocation>
        <location evidence="1">Cell inner membrane</location>
        <topology evidence="1">Peripheral membrane protein</topology>
        <orientation evidence="1">Cytoplasmic side</orientation>
    </subcellularLocation>
</comment>
<comment type="similarity">
    <text evidence="1">Belongs to the TRAFAC class translation factor GTPase superfamily. Classic translation factor GTPase family. LepA subfamily.</text>
</comment>
<protein>
    <recommendedName>
        <fullName evidence="1">Elongation factor 4</fullName>
        <shortName evidence="1">EF-4</shortName>
        <ecNumber evidence="1">3.6.5.n1</ecNumber>
    </recommendedName>
    <alternativeName>
        <fullName evidence="1">Ribosomal back-translocase LepA</fullName>
    </alternativeName>
</protein>
<sequence length="596" mass="65776">MKHIRNFSIIAHIDHGKSTLSDRLIQECGGLSDREMAAQVLDSMDLERERGITIKAQSVTLDYKAKDGETYQLNFIDTPGHVDFSYEVSRSLAACEGALLVVDAGQGVEAQTLANCYTALDMDLDVVPVLNKIDLPQADPERVAEEIEDIVGIEAADAVRCSAKTGLGISDVLETIVAQIPPPEGDPEAPLQALIIDSWFDSYLGVVSLVRIKHGVLKKGDKFKVMSTGQTHTADRVGIFTPKQTDTAQLSTGEVGFVIAGIKEIHGAPVGDTLTLAKNGADKPLPGFKKVKPQVYAGVFPISTDDYENFRDALNKLSLNDASLFFEPETSSALGFGFRIGYLGLLHMEIIQERLEREYNLDLITTAPTVVYEVVTTKGETIYVDNPSDLPPMNNIEEMREPIVETNILVPKEYLGNVITLCIEKRGVQTNMVYHGNQVAITYDMPMAEVVMDFFDRLKSTSRGYASLEYNFKRFEAADMVRLDVLINGDRVDALAMILHKANVRYQGLALVNKMKELIPRQMFDIAIQAAVGSQIIARSSVKALRKDVTAKCYGGDVSRKKKLLQKQKEGKKRMKQVGNVEVPQEAFLAVLKINE</sequence>
<dbReference type="EC" id="3.6.5.n1" evidence="1"/>
<dbReference type="EMBL" id="CP000606">
    <property type="protein sequence ID" value="ABO22923.1"/>
    <property type="molecule type" value="Genomic_DNA"/>
</dbReference>
<dbReference type="RefSeq" id="WP_011864856.1">
    <property type="nucleotide sequence ID" value="NC_009092.1"/>
</dbReference>
<dbReference type="SMR" id="A3QBS5"/>
<dbReference type="STRING" id="323850.Shew_1052"/>
<dbReference type="KEGG" id="slo:Shew_1052"/>
<dbReference type="eggNOG" id="COG0481">
    <property type="taxonomic scope" value="Bacteria"/>
</dbReference>
<dbReference type="HOGENOM" id="CLU_009995_3_3_6"/>
<dbReference type="OrthoDB" id="9804431at2"/>
<dbReference type="Proteomes" id="UP000001558">
    <property type="component" value="Chromosome"/>
</dbReference>
<dbReference type="GO" id="GO:0005886">
    <property type="term" value="C:plasma membrane"/>
    <property type="evidence" value="ECO:0007669"/>
    <property type="project" value="UniProtKB-SubCell"/>
</dbReference>
<dbReference type="GO" id="GO:0005525">
    <property type="term" value="F:GTP binding"/>
    <property type="evidence" value="ECO:0007669"/>
    <property type="project" value="UniProtKB-UniRule"/>
</dbReference>
<dbReference type="GO" id="GO:0003924">
    <property type="term" value="F:GTPase activity"/>
    <property type="evidence" value="ECO:0007669"/>
    <property type="project" value="UniProtKB-UniRule"/>
</dbReference>
<dbReference type="GO" id="GO:0097216">
    <property type="term" value="F:guanosine tetraphosphate binding"/>
    <property type="evidence" value="ECO:0007669"/>
    <property type="project" value="UniProtKB-ARBA"/>
</dbReference>
<dbReference type="GO" id="GO:0043022">
    <property type="term" value="F:ribosome binding"/>
    <property type="evidence" value="ECO:0007669"/>
    <property type="project" value="UniProtKB-UniRule"/>
</dbReference>
<dbReference type="GO" id="GO:0003746">
    <property type="term" value="F:translation elongation factor activity"/>
    <property type="evidence" value="ECO:0007669"/>
    <property type="project" value="UniProtKB-UniRule"/>
</dbReference>
<dbReference type="GO" id="GO:0045727">
    <property type="term" value="P:positive regulation of translation"/>
    <property type="evidence" value="ECO:0007669"/>
    <property type="project" value="UniProtKB-UniRule"/>
</dbReference>
<dbReference type="CDD" id="cd03699">
    <property type="entry name" value="EF4_II"/>
    <property type="match status" value="1"/>
</dbReference>
<dbReference type="CDD" id="cd16260">
    <property type="entry name" value="EF4_III"/>
    <property type="match status" value="1"/>
</dbReference>
<dbReference type="CDD" id="cd01890">
    <property type="entry name" value="LepA"/>
    <property type="match status" value="1"/>
</dbReference>
<dbReference type="CDD" id="cd03709">
    <property type="entry name" value="lepA_C"/>
    <property type="match status" value="1"/>
</dbReference>
<dbReference type="FunFam" id="3.40.50.300:FF:000078">
    <property type="entry name" value="Elongation factor 4"/>
    <property type="match status" value="1"/>
</dbReference>
<dbReference type="FunFam" id="2.40.30.10:FF:000015">
    <property type="entry name" value="Translation factor GUF1, mitochondrial"/>
    <property type="match status" value="1"/>
</dbReference>
<dbReference type="FunFam" id="3.30.70.240:FF:000007">
    <property type="entry name" value="Translation factor GUF1, mitochondrial"/>
    <property type="match status" value="1"/>
</dbReference>
<dbReference type="FunFam" id="3.30.70.2570:FF:000001">
    <property type="entry name" value="Translation factor GUF1, mitochondrial"/>
    <property type="match status" value="1"/>
</dbReference>
<dbReference type="FunFam" id="3.30.70.870:FF:000004">
    <property type="entry name" value="Translation factor GUF1, mitochondrial"/>
    <property type="match status" value="1"/>
</dbReference>
<dbReference type="Gene3D" id="3.30.70.240">
    <property type="match status" value="1"/>
</dbReference>
<dbReference type="Gene3D" id="3.30.70.2570">
    <property type="entry name" value="Elongation factor 4, C-terminal domain"/>
    <property type="match status" value="1"/>
</dbReference>
<dbReference type="Gene3D" id="3.30.70.870">
    <property type="entry name" value="Elongation Factor G (Translational Gtpase), domain 3"/>
    <property type="match status" value="1"/>
</dbReference>
<dbReference type="Gene3D" id="3.40.50.300">
    <property type="entry name" value="P-loop containing nucleotide triphosphate hydrolases"/>
    <property type="match status" value="1"/>
</dbReference>
<dbReference type="Gene3D" id="2.40.30.10">
    <property type="entry name" value="Translation factors"/>
    <property type="match status" value="1"/>
</dbReference>
<dbReference type="HAMAP" id="MF_00071">
    <property type="entry name" value="LepA"/>
    <property type="match status" value="1"/>
</dbReference>
<dbReference type="InterPro" id="IPR006297">
    <property type="entry name" value="EF-4"/>
</dbReference>
<dbReference type="InterPro" id="IPR035647">
    <property type="entry name" value="EFG_III/V"/>
</dbReference>
<dbReference type="InterPro" id="IPR000640">
    <property type="entry name" value="EFG_V-like"/>
</dbReference>
<dbReference type="InterPro" id="IPR004161">
    <property type="entry name" value="EFTu-like_2"/>
</dbReference>
<dbReference type="InterPro" id="IPR031157">
    <property type="entry name" value="G_TR_CS"/>
</dbReference>
<dbReference type="InterPro" id="IPR038363">
    <property type="entry name" value="LepA_C_sf"/>
</dbReference>
<dbReference type="InterPro" id="IPR013842">
    <property type="entry name" value="LepA_CTD"/>
</dbReference>
<dbReference type="InterPro" id="IPR035654">
    <property type="entry name" value="LepA_IV"/>
</dbReference>
<dbReference type="InterPro" id="IPR027417">
    <property type="entry name" value="P-loop_NTPase"/>
</dbReference>
<dbReference type="InterPro" id="IPR005225">
    <property type="entry name" value="Small_GTP-bd"/>
</dbReference>
<dbReference type="InterPro" id="IPR000795">
    <property type="entry name" value="T_Tr_GTP-bd_dom"/>
</dbReference>
<dbReference type="NCBIfam" id="TIGR01393">
    <property type="entry name" value="lepA"/>
    <property type="match status" value="1"/>
</dbReference>
<dbReference type="NCBIfam" id="TIGR00231">
    <property type="entry name" value="small_GTP"/>
    <property type="match status" value="1"/>
</dbReference>
<dbReference type="PANTHER" id="PTHR43512:SF4">
    <property type="entry name" value="TRANSLATION FACTOR GUF1 HOMOLOG, CHLOROPLASTIC"/>
    <property type="match status" value="1"/>
</dbReference>
<dbReference type="PANTHER" id="PTHR43512">
    <property type="entry name" value="TRANSLATION FACTOR GUF1-RELATED"/>
    <property type="match status" value="1"/>
</dbReference>
<dbReference type="Pfam" id="PF00679">
    <property type="entry name" value="EFG_C"/>
    <property type="match status" value="1"/>
</dbReference>
<dbReference type="Pfam" id="PF00009">
    <property type="entry name" value="GTP_EFTU"/>
    <property type="match status" value="1"/>
</dbReference>
<dbReference type="Pfam" id="PF03144">
    <property type="entry name" value="GTP_EFTU_D2"/>
    <property type="match status" value="1"/>
</dbReference>
<dbReference type="Pfam" id="PF06421">
    <property type="entry name" value="LepA_C"/>
    <property type="match status" value="1"/>
</dbReference>
<dbReference type="PRINTS" id="PR00315">
    <property type="entry name" value="ELONGATNFCT"/>
</dbReference>
<dbReference type="SMART" id="SM00838">
    <property type="entry name" value="EFG_C"/>
    <property type="match status" value="1"/>
</dbReference>
<dbReference type="SUPFAM" id="SSF54980">
    <property type="entry name" value="EF-G C-terminal domain-like"/>
    <property type="match status" value="2"/>
</dbReference>
<dbReference type="SUPFAM" id="SSF52540">
    <property type="entry name" value="P-loop containing nucleoside triphosphate hydrolases"/>
    <property type="match status" value="1"/>
</dbReference>
<dbReference type="PROSITE" id="PS00301">
    <property type="entry name" value="G_TR_1"/>
    <property type="match status" value="1"/>
</dbReference>
<dbReference type="PROSITE" id="PS51722">
    <property type="entry name" value="G_TR_2"/>
    <property type="match status" value="1"/>
</dbReference>
<evidence type="ECO:0000255" key="1">
    <source>
        <dbReference type="HAMAP-Rule" id="MF_00071"/>
    </source>
</evidence>
<reference key="1">
    <citation type="submission" date="2007-03" db="EMBL/GenBank/DDBJ databases">
        <title>Complete sequence of Shewanella loihica PV-4.</title>
        <authorList>
            <consortium name="US DOE Joint Genome Institute"/>
            <person name="Copeland A."/>
            <person name="Lucas S."/>
            <person name="Lapidus A."/>
            <person name="Barry K."/>
            <person name="Detter J.C."/>
            <person name="Glavina del Rio T."/>
            <person name="Hammon N."/>
            <person name="Israni S."/>
            <person name="Dalin E."/>
            <person name="Tice H."/>
            <person name="Pitluck S."/>
            <person name="Chain P."/>
            <person name="Malfatti S."/>
            <person name="Shin M."/>
            <person name="Vergez L."/>
            <person name="Schmutz J."/>
            <person name="Larimer F."/>
            <person name="Land M."/>
            <person name="Hauser L."/>
            <person name="Kyrpides N."/>
            <person name="Mikhailova N."/>
            <person name="Romine M.F."/>
            <person name="Serres G."/>
            <person name="Fredrickson J."/>
            <person name="Tiedje J."/>
            <person name="Richardson P."/>
        </authorList>
    </citation>
    <scope>NUCLEOTIDE SEQUENCE [LARGE SCALE GENOMIC DNA]</scope>
    <source>
        <strain>ATCC BAA-1088 / PV-4</strain>
    </source>
</reference>
<feature type="chain" id="PRO_1000032052" description="Elongation factor 4">
    <location>
        <begin position="1"/>
        <end position="596"/>
    </location>
</feature>
<feature type="domain" description="tr-type G">
    <location>
        <begin position="2"/>
        <end position="184"/>
    </location>
</feature>
<feature type="binding site" evidence="1">
    <location>
        <begin position="14"/>
        <end position="19"/>
    </location>
    <ligand>
        <name>GTP</name>
        <dbReference type="ChEBI" id="CHEBI:37565"/>
    </ligand>
</feature>
<feature type="binding site" evidence="1">
    <location>
        <begin position="131"/>
        <end position="134"/>
    </location>
    <ligand>
        <name>GTP</name>
        <dbReference type="ChEBI" id="CHEBI:37565"/>
    </ligand>
</feature>
<gene>
    <name evidence="1" type="primary">lepA</name>
    <name type="ordered locus">Shew_1052</name>
</gene>
<proteinExistence type="inferred from homology"/>